<name>QUEA_ECODH</name>
<sequence length="356" mass="39431">MRVTDFSFELPESLIAHYPMPERSSCRLLSLDGPTGALTHGTFTDLLDKLNPGDLLVFNNTRVIPARLFGRKASGGKIEVLVERMLDDKRILAHIRASKAPKPGAELLLGDDESINATMTARHGALFEVEFNDERSVLDILNSIGHMPLPPYIDRPDEDADRELYQTVYSEKPGAVAAPTAGLHFDEPLLEKLRAKGVEMAFVTLHVGAGTFQPVRVDTIEDHIMHSEYAEVPQDVVDAVLAAKARGNRVIAVGTTSVRSLESAAQAAKNDLIEPFFDDTQIFIYPGFQYKVVDALVTNFHLPESTLIMLVSAFAGYQHTMNAYKAAVEEKYRFFSYGDAMFITYNPQAINERVGE</sequence>
<gene>
    <name evidence="1" type="primary">queA</name>
    <name type="ordered locus">ECDH10B_0361</name>
</gene>
<comment type="function">
    <text evidence="1">Transfers and isomerizes the ribose moiety from AdoMet to the 7-aminomethyl group of 7-deazaguanine (preQ1-tRNA) to give epoxyqueuosine (oQ-tRNA).</text>
</comment>
<comment type="catalytic activity">
    <reaction evidence="1">
        <text>7-aminomethyl-7-carbaguanosine(34) in tRNA + S-adenosyl-L-methionine = epoxyqueuosine(34) in tRNA + adenine + L-methionine + 2 H(+)</text>
        <dbReference type="Rhea" id="RHEA:32155"/>
        <dbReference type="Rhea" id="RHEA-COMP:10342"/>
        <dbReference type="Rhea" id="RHEA-COMP:18582"/>
        <dbReference type="ChEBI" id="CHEBI:15378"/>
        <dbReference type="ChEBI" id="CHEBI:16708"/>
        <dbReference type="ChEBI" id="CHEBI:57844"/>
        <dbReference type="ChEBI" id="CHEBI:59789"/>
        <dbReference type="ChEBI" id="CHEBI:82833"/>
        <dbReference type="ChEBI" id="CHEBI:194443"/>
        <dbReference type="EC" id="2.4.99.17"/>
    </reaction>
</comment>
<comment type="pathway">
    <text evidence="1">tRNA modification; tRNA-queuosine biosynthesis.</text>
</comment>
<comment type="subunit">
    <text evidence="1">Monomer.</text>
</comment>
<comment type="subcellular location">
    <subcellularLocation>
        <location evidence="1">Cytoplasm</location>
    </subcellularLocation>
</comment>
<comment type="similarity">
    <text evidence="1">Belongs to the QueA family.</text>
</comment>
<organism>
    <name type="scientific">Escherichia coli (strain K12 / DH10B)</name>
    <dbReference type="NCBI Taxonomy" id="316385"/>
    <lineage>
        <taxon>Bacteria</taxon>
        <taxon>Pseudomonadati</taxon>
        <taxon>Pseudomonadota</taxon>
        <taxon>Gammaproteobacteria</taxon>
        <taxon>Enterobacterales</taxon>
        <taxon>Enterobacteriaceae</taxon>
        <taxon>Escherichia</taxon>
    </lineage>
</organism>
<protein>
    <recommendedName>
        <fullName evidence="1">S-adenosylmethionine:tRNA ribosyltransferase-isomerase</fullName>
        <ecNumber evidence="1">2.4.99.17</ecNumber>
    </recommendedName>
    <alternativeName>
        <fullName evidence="1">Queuosine biosynthesis protein QueA</fullName>
    </alternativeName>
</protein>
<proteinExistence type="inferred from homology"/>
<reference key="1">
    <citation type="journal article" date="2008" name="J. Bacteriol.">
        <title>The complete genome sequence of Escherichia coli DH10B: insights into the biology of a laboratory workhorse.</title>
        <authorList>
            <person name="Durfee T."/>
            <person name="Nelson R."/>
            <person name="Baldwin S."/>
            <person name="Plunkett G. III"/>
            <person name="Burland V."/>
            <person name="Mau B."/>
            <person name="Petrosino J.F."/>
            <person name="Qin X."/>
            <person name="Muzny D.M."/>
            <person name="Ayele M."/>
            <person name="Gibbs R.A."/>
            <person name="Csorgo B."/>
            <person name="Posfai G."/>
            <person name="Weinstock G.M."/>
            <person name="Blattner F.R."/>
        </authorList>
    </citation>
    <scope>NUCLEOTIDE SEQUENCE [LARGE SCALE GENOMIC DNA]</scope>
    <source>
        <strain>K12 / DH10B</strain>
    </source>
</reference>
<accession>B1XEZ3</accession>
<feature type="chain" id="PRO_1000094773" description="S-adenosylmethionine:tRNA ribosyltransferase-isomerase">
    <location>
        <begin position="1"/>
        <end position="356"/>
    </location>
</feature>
<keyword id="KW-0963">Cytoplasm</keyword>
<keyword id="KW-0671">Queuosine biosynthesis</keyword>
<keyword id="KW-0949">S-adenosyl-L-methionine</keyword>
<keyword id="KW-0808">Transferase</keyword>
<evidence type="ECO:0000255" key="1">
    <source>
        <dbReference type="HAMAP-Rule" id="MF_00113"/>
    </source>
</evidence>
<dbReference type="EC" id="2.4.99.17" evidence="1"/>
<dbReference type="EMBL" id="CP000948">
    <property type="protein sequence ID" value="ACB01533.1"/>
    <property type="molecule type" value="Genomic_DNA"/>
</dbReference>
<dbReference type="RefSeq" id="WP_001266503.1">
    <property type="nucleotide sequence ID" value="NC_010473.1"/>
</dbReference>
<dbReference type="SMR" id="B1XEZ3"/>
<dbReference type="GeneID" id="93777055"/>
<dbReference type="KEGG" id="ecd:ECDH10B_0361"/>
<dbReference type="HOGENOM" id="CLU_039110_1_0_6"/>
<dbReference type="UniPathway" id="UPA00392"/>
<dbReference type="GO" id="GO:0005737">
    <property type="term" value="C:cytoplasm"/>
    <property type="evidence" value="ECO:0007669"/>
    <property type="project" value="UniProtKB-SubCell"/>
</dbReference>
<dbReference type="GO" id="GO:0051075">
    <property type="term" value="F:S-adenosylmethionine:tRNA ribosyltransferase-isomerase activity"/>
    <property type="evidence" value="ECO:0007669"/>
    <property type="project" value="UniProtKB-EC"/>
</dbReference>
<dbReference type="GO" id="GO:0008616">
    <property type="term" value="P:queuosine biosynthetic process"/>
    <property type="evidence" value="ECO:0007669"/>
    <property type="project" value="UniProtKB-UniRule"/>
</dbReference>
<dbReference type="GO" id="GO:0002099">
    <property type="term" value="P:tRNA wobble guanine modification"/>
    <property type="evidence" value="ECO:0007669"/>
    <property type="project" value="TreeGrafter"/>
</dbReference>
<dbReference type="FunFam" id="2.40.10.240:FF:000001">
    <property type="entry name" value="S-adenosylmethionine:tRNA ribosyltransferase-isomerase"/>
    <property type="match status" value="1"/>
</dbReference>
<dbReference type="FunFam" id="3.40.1780.10:FF:000001">
    <property type="entry name" value="S-adenosylmethionine:tRNA ribosyltransferase-isomerase"/>
    <property type="match status" value="1"/>
</dbReference>
<dbReference type="Gene3D" id="2.40.10.240">
    <property type="entry name" value="QueA-like"/>
    <property type="match status" value="1"/>
</dbReference>
<dbReference type="Gene3D" id="3.40.1780.10">
    <property type="entry name" value="QueA-like"/>
    <property type="match status" value="1"/>
</dbReference>
<dbReference type="HAMAP" id="MF_00113">
    <property type="entry name" value="QueA"/>
    <property type="match status" value="1"/>
</dbReference>
<dbReference type="InterPro" id="IPR003699">
    <property type="entry name" value="QueA"/>
</dbReference>
<dbReference type="InterPro" id="IPR042118">
    <property type="entry name" value="QueA_dom1"/>
</dbReference>
<dbReference type="InterPro" id="IPR042119">
    <property type="entry name" value="QueA_dom2"/>
</dbReference>
<dbReference type="InterPro" id="IPR036100">
    <property type="entry name" value="QueA_sf"/>
</dbReference>
<dbReference type="NCBIfam" id="NF001140">
    <property type="entry name" value="PRK00147.1"/>
    <property type="match status" value="1"/>
</dbReference>
<dbReference type="NCBIfam" id="TIGR00113">
    <property type="entry name" value="queA"/>
    <property type="match status" value="1"/>
</dbReference>
<dbReference type="PANTHER" id="PTHR30307">
    <property type="entry name" value="S-ADENOSYLMETHIONINE:TRNA RIBOSYLTRANSFERASE-ISOMERASE"/>
    <property type="match status" value="1"/>
</dbReference>
<dbReference type="PANTHER" id="PTHR30307:SF0">
    <property type="entry name" value="S-ADENOSYLMETHIONINE:TRNA RIBOSYLTRANSFERASE-ISOMERASE"/>
    <property type="match status" value="1"/>
</dbReference>
<dbReference type="Pfam" id="PF02547">
    <property type="entry name" value="Queuosine_synth"/>
    <property type="match status" value="1"/>
</dbReference>
<dbReference type="SUPFAM" id="SSF111337">
    <property type="entry name" value="QueA-like"/>
    <property type="match status" value="1"/>
</dbReference>